<reference key="1">
    <citation type="journal article" date="2008" name="Antimicrob. Agents Chemother.">
        <title>Mutated response regulator graR is responsible for phenotypic conversion of Staphylococcus aureus from heterogeneous vancomycin-intermediate resistance to vancomycin-intermediate resistance.</title>
        <authorList>
            <person name="Neoh H.-M."/>
            <person name="Cui L."/>
            <person name="Yuzawa H."/>
            <person name="Takeuchi F."/>
            <person name="Matsuo M."/>
            <person name="Hiramatsu K."/>
        </authorList>
    </citation>
    <scope>NUCLEOTIDE SEQUENCE [LARGE SCALE GENOMIC DNA]</scope>
    <source>
        <strain>Mu3 / ATCC 700698</strain>
    </source>
</reference>
<sequence>MQILLVEDDNTLFQELKKELEQWDFNVAGIEDFGKVMDTFESFNPEIVILDVQLPKYDGFYWCRKMREVSNVPILFLSSRDNPMDQVMSMELGADDYMQKPFYTNVLIAKLQAIYRRVYEFTAEEKRTLTWQDAVVDLSKDSIQKGDDTIFLSKTEMIILEILITKKNQIVSRDTIITALWDDEAFVSDNTLTVNVNRLRKKLSEISMDSAIETKVGKGYMAHE</sequence>
<gene>
    <name type="primary">graR</name>
    <name type="ordered locus">SAHV_0656</name>
</gene>
<keyword id="KW-0010">Activator</keyword>
<keyword id="KW-0046">Antibiotic resistance</keyword>
<keyword id="KW-0963">Cytoplasm</keyword>
<keyword id="KW-0238">DNA-binding</keyword>
<keyword id="KW-0597">Phosphoprotein</keyword>
<keyword id="KW-0678">Repressor</keyword>
<keyword id="KW-0804">Transcription</keyword>
<keyword id="KW-0805">Transcription regulation</keyword>
<keyword id="KW-0902">Two-component regulatory system</keyword>
<keyword id="KW-0843">Virulence</keyword>
<name>GRAR_STAA1</name>
<accession>A7WZC3</accession>
<comment type="function">
    <text evidence="3">Member of the two-component regulatory system GraR/GraS involved in resistance against cationic antimicrobial peptides (CAMPs). Upon phosphorylation by GraS, functions as a transcription regulator by direct binding to promoter regions of target genes such as adhesins, exoproteins, transporters, toxins, and proteins involved in cell wall synthesis. Down-regulates the expression of many genes involved in RNA and amino acid synthesis or glycolysis.</text>
</comment>
<comment type="subunit">
    <text evidence="2">Interacts with GraX.</text>
</comment>
<comment type="subcellular location">
    <subcellularLocation>
        <location evidence="1">Cytoplasm</location>
    </subcellularLocation>
</comment>
<comment type="PTM">
    <text evidence="3">Phosphorylated by GraS. Phosphorylated by Stk1; phosphorylation increases the DNA-binding activity of GraR.</text>
</comment>
<proteinExistence type="inferred from homology"/>
<organism>
    <name type="scientific">Staphylococcus aureus (strain Mu3 / ATCC 700698)</name>
    <dbReference type="NCBI Taxonomy" id="418127"/>
    <lineage>
        <taxon>Bacteria</taxon>
        <taxon>Bacillati</taxon>
        <taxon>Bacillota</taxon>
        <taxon>Bacilli</taxon>
        <taxon>Bacillales</taxon>
        <taxon>Staphylococcaceae</taxon>
        <taxon>Staphylococcus</taxon>
    </lineage>
</organism>
<evidence type="ECO:0000250" key="1"/>
<evidence type="ECO:0000250" key="2">
    <source>
        <dbReference type="UniProtKB" id="Q2G0D9"/>
    </source>
</evidence>
<evidence type="ECO:0000250" key="3">
    <source>
        <dbReference type="UniProtKB" id="Q2G0E0"/>
    </source>
</evidence>
<evidence type="ECO:0000255" key="4">
    <source>
        <dbReference type="PROSITE-ProRule" id="PRU00169"/>
    </source>
</evidence>
<evidence type="ECO:0000255" key="5">
    <source>
        <dbReference type="PROSITE-ProRule" id="PRU01091"/>
    </source>
</evidence>
<dbReference type="EMBL" id="AP009324">
    <property type="protein sequence ID" value="BAF77539.1"/>
    <property type="molecule type" value="Genomic_DNA"/>
</dbReference>
<dbReference type="RefSeq" id="WP_001166500.1">
    <property type="nucleotide sequence ID" value="NC_009782.1"/>
</dbReference>
<dbReference type="SMR" id="A7WZC3"/>
<dbReference type="KEGG" id="saw:SAHV_0656"/>
<dbReference type="HOGENOM" id="CLU_000445_30_3_9"/>
<dbReference type="GO" id="GO:0005829">
    <property type="term" value="C:cytosol"/>
    <property type="evidence" value="ECO:0007669"/>
    <property type="project" value="TreeGrafter"/>
</dbReference>
<dbReference type="GO" id="GO:0032993">
    <property type="term" value="C:protein-DNA complex"/>
    <property type="evidence" value="ECO:0007669"/>
    <property type="project" value="TreeGrafter"/>
</dbReference>
<dbReference type="GO" id="GO:0000156">
    <property type="term" value="F:phosphorelay response regulator activity"/>
    <property type="evidence" value="ECO:0007669"/>
    <property type="project" value="TreeGrafter"/>
</dbReference>
<dbReference type="GO" id="GO:0000976">
    <property type="term" value="F:transcription cis-regulatory region binding"/>
    <property type="evidence" value="ECO:0007669"/>
    <property type="project" value="TreeGrafter"/>
</dbReference>
<dbReference type="GO" id="GO:0006355">
    <property type="term" value="P:regulation of DNA-templated transcription"/>
    <property type="evidence" value="ECO:0007669"/>
    <property type="project" value="InterPro"/>
</dbReference>
<dbReference type="GO" id="GO:0046677">
    <property type="term" value="P:response to antibiotic"/>
    <property type="evidence" value="ECO:0007669"/>
    <property type="project" value="UniProtKB-KW"/>
</dbReference>
<dbReference type="CDD" id="cd18159">
    <property type="entry name" value="REC_OmpR_NsrR-like"/>
    <property type="match status" value="1"/>
</dbReference>
<dbReference type="CDD" id="cd00383">
    <property type="entry name" value="trans_reg_C"/>
    <property type="match status" value="1"/>
</dbReference>
<dbReference type="FunFam" id="3.40.50.2300:FF:000232">
    <property type="entry name" value="Response regulator GraR"/>
    <property type="match status" value="1"/>
</dbReference>
<dbReference type="FunFam" id="1.10.10.10:FF:000546">
    <property type="entry name" value="Two-component response regulator GraR"/>
    <property type="match status" value="1"/>
</dbReference>
<dbReference type="Gene3D" id="3.40.50.2300">
    <property type="match status" value="1"/>
</dbReference>
<dbReference type="Gene3D" id="1.10.10.10">
    <property type="entry name" value="Winged helix-like DNA-binding domain superfamily/Winged helix DNA-binding domain"/>
    <property type="match status" value="1"/>
</dbReference>
<dbReference type="InterPro" id="IPR011006">
    <property type="entry name" value="CheY-like_superfamily"/>
</dbReference>
<dbReference type="InterPro" id="IPR001867">
    <property type="entry name" value="OmpR/PhoB-type_DNA-bd"/>
</dbReference>
<dbReference type="InterPro" id="IPR016032">
    <property type="entry name" value="Sig_transdc_resp-reg_C-effctor"/>
</dbReference>
<dbReference type="InterPro" id="IPR001789">
    <property type="entry name" value="Sig_transdc_resp-reg_receiver"/>
</dbReference>
<dbReference type="InterPro" id="IPR039420">
    <property type="entry name" value="WalR-like"/>
</dbReference>
<dbReference type="InterPro" id="IPR036388">
    <property type="entry name" value="WH-like_DNA-bd_sf"/>
</dbReference>
<dbReference type="PANTHER" id="PTHR48111">
    <property type="entry name" value="REGULATOR OF RPOS"/>
    <property type="match status" value="1"/>
</dbReference>
<dbReference type="PANTHER" id="PTHR48111:SF27">
    <property type="entry name" value="SENSORY TRANSDUCTION PROTEIN BCER"/>
    <property type="match status" value="1"/>
</dbReference>
<dbReference type="Pfam" id="PF00072">
    <property type="entry name" value="Response_reg"/>
    <property type="match status" value="1"/>
</dbReference>
<dbReference type="Pfam" id="PF00486">
    <property type="entry name" value="Trans_reg_C"/>
    <property type="match status" value="1"/>
</dbReference>
<dbReference type="SMART" id="SM00448">
    <property type="entry name" value="REC"/>
    <property type="match status" value="1"/>
</dbReference>
<dbReference type="SMART" id="SM00862">
    <property type="entry name" value="Trans_reg_C"/>
    <property type="match status" value="1"/>
</dbReference>
<dbReference type="SUPFAM" id="SSF46894">
    <property type="entry name" value="C-terminal effector domain of the bipartite response regulators"/>
    <property type="match status" value="1"/>
</dbReference>
<dbReference type="SUPFAM" id="SSF52172">
    <property type="entry name" value="CheY-like"/>
    <property type="match status" value="1"/>
</dbReference>
<dbReference type="PROSITE" id="PS51755">
    <property type="entry name" value="OMPR_PHOB"/>
    <property type="match status" value="1"/>
</dbReference>
<dbReference type="PROSITE" id="PS50110">
    <property type="entry name" value="RESPONSE_REGULATORY"/>
    <property type="match status" value="1"/>
</dbReference>
<protein>
    <recommendedName>
        <fullName>Response regulator protein GraR</fullName>
    </recommendedName>
    <alternativeName>
        <fullName>Glycopeptide resistance-associated protein R</fullName>
    </alternativeName>
</protein>
<feature type="chain" id="PRO_0000347901" description="Response regulator protein GraR">
    <location>
        <begin position="1"/>
        <end position="224"/>
    </location>
</feature>
<feature type="domain" description="Response regulatory" evidence="4">
    <location>
        <begin position="2"/>
        <end position="115"/>
    </location>
</feature>
<feature type="DNA-binding region" description="OmpR/PhoB-type" evidence="5">
    <location>
        <begin position="126"/>
        <end position="224"/>
    </location>
</feature>
<feature type="modified residue" description="4-aspartylphosphate" evidence="4">
    <location>
        <position position="51"/>
    </location>
</feature>
<feature type="modified residue" description="Phosphothreonine" evidence="3">
    <location>
        <position position="128"/>
    </location>
</feature>
<feature type="modified residue" description="Phosphothreonine" evidence="3">
    <location>
        <position position="130"/>
    </location>
</feature>
<feature type="modified residue" description="Phosphothreonine" evidence="3">
    <location>
        <position position="149"/>
    </location>
</feature>